<accession>Q5ZRF3</accession>
<comment type="function">
    <text evidence="1">Catalyzes the pyruvoyl-dependent decarboxylation of aspartate to produce beta-alanine.</text>
</comment>
<comment type="catalytic activity">
    <reaction evidence="1">
        <text>L-aspartate + H(+) = beta-alanine + CO2</text>
        <dbReference type="Rhea" id="RHEA:19497"/>
        <dbReference type="ChEBI" id="CHEBI:15378"/>
        <dbReference type="ChEBI" id="CHEBI:16526"/>
        <dbReference type="ChEBI" id="CHEBI:29991"/>
        <dbReference type="ChEBI" id="CHEBI:57966"/>
        <dbReference type="EC" id="4.1.1.11"/>
    </reaction>
</comment>
<comment type="cofactor">
    <cofactor evidence="1">
        <name>pyruvate</name>
        <dbReference type="ChEBI" id="CHEBI:15361"/>
    </cofactor>
    <text evidence="1">Binds 1 pyruvoyl group covalently per subunit.</text>
</comment>
<comment type="pathway">
    <text evidence="1">Cofactor biosynthesis; (R)-pantothenate biosynthesis; beta-alanine from L-aspartate: step 1/1.</text>
</comment>
<comment type="subunit">
    <text evidence="1">Heterooctamer of four alpha and four beta subunits.</text>
</comment>
<comment type="subcellular location">
    <subcellularLocation>
        <location evidence="1">Cytoplasm</location>
    </subcellularLocation>
</comment>
<comment type="PTM">
    <text evidence="1">Is synthesized initially as an inactive proenzyme, which is activated by self-cleavage at a specific serine bond to produce a beta-subunit with a hydroxyl group at its C-terminus and an alpha-subunit with a pyruvoyl group at its N-terminus.</text>
</comment>
<comment type="similarity">
    <text evidence="1">Belongs to the PanD family.</text>
</comment>
<name>PAND_LEGPH</name>
<proteinExistence type="inferred from homology"/>
<reference key="1">
    <citation type="journal article" date="2004" name="Science">
        <title>The genomic sequence of the accidental pathogen Legionella pneumophila.</title>
        <authorList>
            <person name="Chien M."/>
            <person name="Morozova I."/>
            <person name="Shi S."/>
            <person name="Sheng H."/>
            <person name="Chen J."/>
            <person name="Gomez S.M."/>
            <person name="Asamani G."/>
            <person name="Hill K."/>
            <person name="Nuara J."/>
            <person name="Feder M."/>
            <person name="Rineer J."/>
            <person name="Greenberg J.J."/>
            <person name="Steshenko V."/>
            <person name="Park S.H."/>
            <person name="Zhao B."/>
            <person name="Teplitskaya E."/>
            <person name="Edwards J.R."/>
            <person name="Pampou S."/>
            <person name="Georghiou A."/>
            <person name="Chou I.-C."/>
            <person name="Iannuccilli W."/>
            <person name="Ulz M.E."/>
            <person name="Kim D.H."/>
            <person name="Geringer-Sameth A."/>
            <person name="Goldsberry C."/>
            <person name="Morozov P."/>
            <person name="Fischer S.G."/>
            <person name="Segal G."/>
            <person name="Qu X."/>
            <person name="Rzhetsky A."/>
            <person name="Zhang P."/>
            <person name="Cayanis E."/>
            <person name="De Jong P.J."/>
            <person name="Ju J."/>
            <person name="Kalachikov S."/>
            <person name="Shuman H.A."/>
            <person name="Russo J.J."/>
        </authorList>
    </citation>
    <scope>NUCLEOTIDE SEQUENCE [LARGE SCALE GENOMIC DNA]</scope>
    <source>
        <strain>Philadelphia 1 / ATCC 33152 / DSM 7513</strain>
    </source>
</reference>
<dbReference type="EC" id="4.1.1.11" evidence="1"/>
<dbReference type="EMBL" id="AE017354">
    <property type="protein sequence ID" value="AAU28975.1"/>
    <property type="molecule type" value="Genomic_DNA"/>
</dbReference>
<dbReference type="RefSeq" id="WP_010948614.1">
    <property type="nucleotide sequence ID" value="NC_002942.5"/>
</dbReference>
<dbReference type="RefSeq" id="YP_096922.1">
    <property type="nucleotide sequence ID" value="NC_002942.5"/>
</dbReference>
<dbReference type="SMR" id="Q5ZRF3"/>
<dbReference type="STRING" id="272624.lpg2929"/>
<dbReference type="PaxDb" id="272624-lpg2929"/>
<dbReference type="GeneID" id="57036932"/>
<dbReference type="KEGG" id="lpn:lpg2929"/>
<dbReference type="PATRIC" id="fig|272624.6.peg.3127"/>
<dbReference type="eggNOG" id="COG0853">
    <property type="taxonomic scope" value="Bacteria"/>
</dbReference>
<dbReference type="HOGENOM" id="CLU_115305_2_0_6"/>
<dbReference type="OrthoDB" id="9803983at2"/>
<dbReference type="UniPathway" id="UPA00028">
    <property type="reaction ID" value="UER00002"/>
</dbReference>
<dbReference type="Proteomes" id="UP000000609">
    <property type="component" value="Chromosome"/>
</dbReference>
<dbReference type="GO" id="GO:0005829">
    <property type="term" value="C:cytosol"/>
    <property type="evidence" value="ECO:0007669"/>
    <property type="project" value="TreeGrafter"/>
</dbReference>
<dbReference type="GO" id="GO:0004068">
    <property type="term" value="F:aspartate 1-decarboxylase activity"/>
    <property type="evidence" value="ECO:0007669"/>
    <property type="project" value="UniProtKB-UniRule"/>
</dbReference>
<dbReference type="GO" id="GO:0006523">
    <property type="term" value="P:alanine biosynthetic process"/>
    <property type="evidence" value="ECO:0007669"/>
    <property type="project" value="InterPro"/>
</dbReference>
<dbReference type="GO" id="GO:0015940">
    <property type="term" value="P:pantothenate biosynthetic process"/>
    <property type="evidence" value="ECO:0007669"/>
    <property type="project" value="UniProtKB-UniRule"/>
</dbReference>
<dbReference type="CDD" id="cd06919">
    <property type="entry name" value="Asp_decarbox"/>
    <property type="match status" value="1"/>
</dbReference>
<dbReference type="Gene3D" id="2.40.40.20">
    <property type="match status" value="1"/>
</dbReference>
<dbReference type="HAMAP" id="MF_00446">
    <property type="entry name" value="PanD"/>
    <property type="match status" value="1"/>
</dbReference>
<dbReference type="InterPro" id="IPR009010">
    <property type="entry name" value="Asp_de-COase-like_dom_sf"/>
</dbReference>
<dbReference type="InterPro" id="IPR003190">
    <property type="entry name" value="Asp_decarbox"/>
</dbReference>
<dbReference type="NCBIfam" id="TIGR00223">
    <property type="entry name" value="panD"/>
    <property type="match status" value="1"/>
</dbReference>
<dbReference type="PANTHER" id="PTHR21012">
    <property type="entry name" value="ASPARTATE 1-DECARBOXYLASE"/>
    <property type="match status" value="1"/>
</dbReference>
<dbReference type="PANTHER" id="PTHR21012:SF0">
    <property type="entry name" value="ASPARTATE 1-DECARBOXYLASE"/>
    <property type="match status" value="1"/>
</dbReference>
<dbReference type="Pfam" id="PF02261">
    <property type="entry name" value="Asp_decarbox"/>
    <property type="match status" value="1"/>
</dbReference>
<dbReference type="PIRSF" id="PIRSF006246">
    <property type="entry name" value="Asp_decarbox"/>
    <property type="match status" value="1"/>
</dbReference>
<dbReference type="SUPFAM" id="SSF50692">
    <property type="entry name" value="ADC-like"/>
    <property type="match status" value="1"/>
</dbReference>
<protein>
    <recommendedName>
        <fullName evidence="1">Aspartate 1-decarboxylase</fullName>
        <ecNumber evidence="1">4.1.1.11</ecNumber>
    </recommendedName>
    <alternativeName>
        <fullName evidence="1">Aspartate alpha-decarboxylase</fullName>
    </alternativeName>
    <component>
        <recommendedName>
            <fullName evidence="1">Aspartate 1-decarboxylase beta chain</fullName>
        </recommendedName>
    </component>
    <component>
        <recommendedName>
            <fullName evidence="1">Aspartate 1-decarboxylase alpha chain</fullName>
        </recommendedName>
    </component>
</protein>
<feature type="chain" id="PRO_0000023097" description="Aspartate 1-decarboxylase beta chain" evidence="1">
    <location>
        <begin position="1"/>
        <end position="25"/>
    </location>
</feature>
<feature type="chain" id="PRO_0000023098" description="Aspartate 1-decarboxylase alpha chain" evidence="1">
    <location>
        <begin position="26"/>
        <end position="133"/>
    </location>
</feature>
<feature type="active site" description="Schiff-base intermediate with substrate; via pyruvic acid" evidence="1">
    <location>
        <position position="26"/>
    </location>
</feature>
<feature type="active site" description="Proton donor" evidence="1">
    <location>
        <position position="59"/>
    </location>
</feature>
<feature type="binding site" evidence="1">
    <location>
        <position position="58"/>
    </location>
    <ligand>
        <name>substrate</name>
    </ligand>
</feature>
<feature type="binding site" evidence="1">
    <location>
        <begin position="74"/>
        <end position="76"/>
    </location>
    <ligand>
        <name>substrate</name>
    </ligand>
</feature>
<feature type="modified residue" description="Pyruvic acid (Ser)" evidence="1">
    <location>
        <position position="26"/>
    </location>
</feature>
<sequence>MAYRKMLKSKIHRACVTQADLDYEGSITISPELLKVANILPYEAVNVWNITAGTRFETYAITGEKGSTDICVNGAAAHLVTPGDLVIIASFTQILEEDCAAHEPTVVFVDQFNRLKEIRPERIGVKSRIPNPA</sequence>
<organism>
    <name type="scientific">Legionella pneumophila subsp. pneumophila (strain Philadelphia 1 / ATCC 33152 / DSM 7513)</name>
    <dbReference type="NCBI Taxonomy" id="272624"/>
    <lineage>
        <taxon>Bacteria</taxon>
        <taxon>Pseudomonadati</taxon>
        <taxon>Pseudomonadota</taxon>
        <taxon>Gammaproteobacteria</taxon>
        <taxon>Legionellales</taxon>
        <taxon>Legionellaceae</taxon>
        <taxon>Legionella</taxon>
    </lineage>
</organism>
<evidence type="ECO:0000255" key="1">
    <source>
        <dbReference type="HAMAP-Rule" id="MF_00446"/>
    </source>
</evidence>
<gene>
    <name evidence="1" type="primary">panD</name>
    <name type="ordered locus">lpg2929</name>
</gene>
<keyword id="KW-0068">Autocatalytic cleavage</keyword>
<keyword id="KW-0963">Cytoplasm</keyword>
<keyword id="KW-0210">Decarboxylase</keyword>
<keyword id="KW-0456">Lyase</keyword>
<keyword id="KW-0566">Pantothenate biosynthesis</keyword>
<keyword id="KW-0670">Pyruvate</keyword>
<keyword id="KW-1185">Reference proteome</keyword>
<keyword id="KW-0704">Schiff base</keyword>
<keyword id="KW-0865">Zymogen</keyword>